<name>DPO42_MYCBO</name>
<sequence>MPTAAPRWILHVDLDQFLASVELLRHPELAGLPVIVGGNGDPTEPRKVVTCASYEARAYGVRAGMPLRTAARRCPEATFLPSNPAAYNAASEEVVALLRDLGYPVEVWGWDEAYLAVAPGTPDDPIEVAEEIRKVILSQTGLSCSIGISDNKQRAKIATGLAKPAGIYQLTDANWMAIMGDRTVEALWGVGPKTTKRLAKLGINTVYQLAHTDSGLLMSTFGPRTALWLLLAKGGGDTEVSAQAWVPRSRSHAVTFPRDLTCRSEMESAVTELAQRTLNEVVASSRTVTRVAVTVRTATFYTRTKIRKLQAPSTDPDVITAAARHVLDLFELDRPVRLLGVRLELA</sequence>
<evidence type="ECO:0000250" key="1"/>
<evidence type="ECO:0000305" key="2"/>
<protein>
    <recommendedName>
        <fullName>DNA polymerase IV 2</fullName>
        <shortName>Pol IV 2</shortName>
        <ecNumber>2.7.7.7</ecNumber>
    </recommendedName>
</protein>
<proteinExistence type="inferred from homology"/>
<keyword id="KW-0963">Cytoplasm</keyword>
<keyword id="KW-0227">DNA damage</keyword>
<keyword id="KW-0234">DNA repair</keyword>
<keyword id="KW-0235">DNA replication</keyword>
<keyword id="KW-0238">DNA-binding</keyword>
<keyword id="KW-0239">DNA-directed DNA polymerase</keyword>
<keyword id="KW-0460">Magnesium</keyword>
<keyword id="KW-0479">Metal-binding</keyword>
<keyword id="KW-0515">Mutator protein</keyword>
<keyword id="KW-0548">Nucleotidyltransferase</keyword>
<keyword id="KW-1185">Reference proteome</keyword>
<keyword id="KW-0808">Transferase</keyword>
<feature type="chain" id="PRO_0000173927" description="DNA polymerase IV 2">
    <location>
        <begin position="1"/>
        <end position="346"/>
    </location>
</feature>
<feature type="domain" description="UmuC">
    <location>
        <begin position="9"/>
        <end position="191"/>
    </location>
</feature>
<feature type="active site" evidence="1">
    <location>
        <position position="112"/>
    </location>
</feature>
<feature type="binding site" evidence="1">
    <location>
        <position position="13"/>
    </location>
    <ligand>
        <name>Mg(2+)</name>
        <dbReference type="ChEBI" id="CHEBI:18420"/>
    </ligand>
</feature>
<feature type="binding site" evidence="1">
    <location>
        <position position="111"/>
    </location>
    <ligand>
        <name>Mg(2+)</name>
        <dbReference type="ChEBI" id="CHEBI:18420"/>
    </ligand>
</feature>
<feature type="site" description="Substrate discrimination" evidence="1">
    <location>
        <position position="18"/>
    </location>
</feature>
<dbReference type="EC" id="2.7.7.7"/>
<dbReference type="EMBL" id="LT708304">
    <property type="protein sequence ID" value="SIU01707.1"/>
    <property type="molecule type" value="Genomic_DNA"/>
</dbReference>
<dbReference type="RefSeq" id="NP_856727.1">
    <property type="nucleotide sequence ID" value="NC_002945.3"/>
</dbReference>
<dbReference type="RefSeq" id="WP_003899898.1">
    <property type="nucleotide sequence ID" value="NC_002945.4"/>
</dbReference>
<dbReference type="SMR" id="P63988"/>
<dbReference type="KEGG" id="mbo:BQ2027_MB3082"/>
<dbReference type="PATRIC" id="fig|233413.5.peg.3386"/>
<dbReference type="Proteomes" id="UP000001419">
    <property type="component" value="Chromosome"/>
</dbReference>
<dbReference type="GO" id="GO:0005829">
    <property type="term" value="C:cytosol"/>
    <property type="evidence" value="ECO:0007669"/>
    <property type="project" value="TreeGrafter"/>
</dbReference>
<dbReference type="GO" id="GO:0003684">
    <property type="term" value="F:damaged DNA binding"/>
    <property type="evidence" value="ECO:0007669"/>
    <property type="project" value="InterPro"/>
</dbReference>
<dbReference type="GO" id="GO:0003887">
    <property type="term" value="F:DNA-directed DNA polymerase activity"/>
    <property type="evidence" value="ECO:0007669"/>
    <property type="project" value="UniProtKB-UniRule"/>
</dbReference>
<dbReference type="GO" id="GO:0000287">
    <property type="term" value="F:magnesium ion binding"/>
    <property type="evidence" value="ECO:0007669"/>
    <property type="project" value="UniProtKB-UniRule"/>
</dbReference>
<dbReference type="GO" id="GO:0006261">
    <property type="term" value="P:DNA-templated DNA replication"/>
    <property type="evidence" value="ECO:0007669"/>
    <property type="project" value="UniProtKB-UniRule"/>
</dbReference>
<dbReference type="GO" id="GO:0042276">
    <property type="term" value="P:error-prone translesion synthesis"/>
    <property type="evidence" value="ECO:0007669"/>
    <property type="project" value="TreeGrafter"/>
</dbReference>
<dbReference type="GO" id="GO:0009432">
    <property type="term" value="P:SOS response"/>
    <property type="evidence" value="ECO:0007669"/>
    <property type="project" value="TreeGrafter"/>
</dbReference>
<dbReference type="CDD" id="cd03586">
    <property type="entry name" value="PolY_Pol_IV_kappa"/>
    <property type="match status" value="1"/>
</dbReference>
<dbReference type="FunFam" id="3.30.1490.100:FF:000018">
    <property type="entry name" value="DNA polymerase IV"/>
    <property type="match status" value="1"/>
</dbReference>
<dbReference type="Gene3D" id="3.30.70.270">
    <property type="match status" value="1"/>
</dbReference>
<dbReference type="Gene3D" id="3.40.1170.60">
    <property type="match status" value="1"/>
</dbReference>
<dbReference type="Gene3D" id="1.10.150.20">
    <property type="entry name" value="5' to 3' exonuclease, C-terminal subdomain"/>
    <property type="match status" value="1"/>
</dbReference>
<dbReference type="Gene3D" id="3.30.1490.100">
    <property type="entry name" value="DNA polymerase, Y-family, little finger domain"/>
    <property type="match status" value="1"/>
</dbReference>
<dbReference type="HAMAP" id="MF_01113">
    <property type="entry name" value="DNApol_IV"/>
    <property type="match status" value="1"/>
</dbReference>
<dbReference type="InterPro" id="IPR043502">
    <property type="entry name" value="DNA/RNA_pol_sf"/>
</dbReference>
<dbReference type="InterPro" id="IPR036775">
    <property type="entry name" value="DNA_pol_Y-fam_lit_finger_sf"/>
</dbReference>
<dbReference type="InterPro" id="IPR017961">
    <property type="entry name" value="DNA_pol_Y-fam_little_finger"/>
</dbReference>
<dbReference type="InterPro" id="IPR050116">
    <property type="entry name" value="DNA_polymerase-Y"/>
</dbReference>
<dbReference type="InterPro" id="IPR022880">
    <property type="entry name" value="DNApol_IV"/>
</dbReference>
<dbReference type="InterPro" id="IPR043128">
    <property type="entry name" value="Rev_trsase/Diguanyl_cyclase"/>
</dbReference>
<dbReference type="InterPro" id="IPR001126">
    <property type="entry name" value="UmuC"/>
</dbReference>
<dbReference type="NCBIfam" id="NF002883">
    <property type="entry name" value="PRK03352.1"/>
    <property type="match status" value="1"/>
</dbReference>
<dbReference type="PANTHER" id="PTHR11076:SF33">
    <property type="entry name" value="DNA POLYMERASE KAPPA"/>
    <property type="match status" value="1"/>
</dbReference>
<dbReference type="PANTHER" id="PTHR11076">
    <property type="entry name" value="DNA REPAIR POLYMERASE UMUC / TRANSFERASE FAMILY MEMBER"/>
    <property type="match status" value="1"/>
</dbReference>
<dbReference type="Pfam" id="PF00817">
    <property type="entry name" value="IMS"/>
    <property type="match status" value="1"/>
</dbReference>
<dbReference type="Pfam" id="PF11799">
    <property type="entry name" value="IMS_C"/>
    <property type="match status" value="1"/>
</dbReference>
<dbReference type="SUPFAM" id="SSF56672">
    <property type="entry name" value="DNA/RNA polymerases"/>
    <property type="match status" value="1"/>
</dbReference>
<dbReference type="SUPFAM" id="SSF100879">
    <property type="entry name" value="Lesion bypass DNA polymerase (Y-family), little finger domain"/>
    <property type="match status" value="1"/>
</dbReference>
<dbReference type="PROSITE" id="PS50173">
    <property type="entry name" value="UMUC"/>
    <property type="match status" value="1"/>
</dbReference>
<accession>P63988</accession>
<accession>A0A1R3Y354</accession>
<accession>P95102</accession>
<accession>X2BN83</accession>
<gene>
    <name type="primary">dinB2</name>
    <name type="synonym">dinP</name>
    <name type="ordered locus">BQ2027_MB3082</name>
</gene>
<organism>
    <name type="scientific">Mycobacterium bovis (strain ATCC BAA-935 / AF2122/97)</name>
    <dbReference type="NCBI Taxonomy" id="233413"/>
    <lineage>
        <taxon>Bacteria</taxon>
        <taxon>Bacillati</taxon>
        <taxon>Actinomycetota</taxon>
        <taxon>Actinomycetes</taxon>
        <taxon>Mycobacteriales</taxon>
        <taxon>Mycobacteriaceae</taxon>
        <taxon>Mycobacterium</taxon>
        <taxon>Mycobacterium tuberculosis complex</taxon>
    </lineage>
</organism>
<comment type="function">
    <text evidence="1">Poorly processive, error-prone DNA polymerase involved in untargeted mutagenesis. Copies undamaged DNA at stalled replication forks, which arise in vivo from mismatched or misaligned primer ends. These misaligned primers can be extended by PolIV. Exhibits no 3'-5' exonuclease (proofreading) activity. May be involved in translesional synthesis, in conjunction with the beta clamp from PolIII (By similarity).</text>
</comment>
<comment type="catalytic activity">
    <reaction>
        <text>DNA(n) + a 2'-deoxyribonucleoside 5'-triphosphate = DNA(n+1) + diphosphate</text>
        <dbReference type="Rhea" id="RHEA:22508"/>
        <dbReference type="Rhea" id="RHEA-COMP:17339"/>
        <dbReference type="Rhea" id="RHEA-COMP:17340"/>
        <dbReference type="ChEBI" id="CHEBI:33019"/>
        <dbReference type="ChEBI" id="CHEBI:61560"/>
        <dbReference type="ChEBI" id="CHEBI:173112"/>
        <dbReference type="EC" id="2.7.7.7"/>
    </reaction>
</comment>
<comment type="cofactor">
    <cofactor evidence="1">
        <name>Mg(2+)</name>
        <dbReference type="ChEBI" id="CHEBI:18420"/>
    </cofactor>
    <text evidence="1">Binds 2 magnesium ions per subunit.</text>
</comment>
<comment type="subunit">
    <text evidence="1">Monomer.</text>
</comment>
<comment type="subcellular location">
    <subcellularLocation>
        <location evidence="1">Cytoplasm</location>
    </subcellularLocation>
</comment>
<comment type="similarity">
    <text evidence="2">Belongs to the DNA polymerase type-Y family.</text>
</comment>
<reference key="1">
    <citation type="journal article" date="2003" name="Proc. Natl. Acad. Sci. U.S.A.">
        <title>The complete genome sequence of Mycobacterium bovis.</title>
        <authorList>
            <person name="Garnier T."/>
            <person name="Eiglmeier K."/>
            <person name="Camus J.-C."/>
            <person name="Medina N."/>
            <person name="Mansoor H."/>
            <person name="Pryor M."/>
            <person name="Duthoy S."/>
            <person name="Grondin S."/>
            <person name="Lacroix C."/>
            <person name="Monsempe C."/>
            <person name="Simon S."/>
            <person name="Harris B."/>
            <person name="Atkin R."/>
            <person name="Doggett J."/>
            <person name="Mayes R."/>
            <person name="Keating L."/>
            <person name="Wheeler P.R."/>
            <person name="Parkhill J."/>
            <person name="Barrell B.G."/>
            <person name="Cole S.T."/>
            <person name="Gordon S.V."/>
            <person name="Hewinson R.G."/>
        </authorList>
    </citation>
    <scope>NUCLEOTIDE SEQUENCE [LARGE SCALE GENOMIC DNA]</scope>
    <source>
        <strain>ATCC BAA-935 / AF2122/97</strain>
    </source>
</reference>
<reference key="2">
    <citation type="journal article" date="2017" name="Genome Announc.">
        <title>Updated reference genome sequence and annotation of Mycobacterium bovis AF2122/97.</title>
        <authorList>
            <person name="Malone K.M."/>
            <person name="Farrell D."/>
            <person name="Stuber T.P."/>
            <person name="Schubert O.T."/>
            <person name="Aebersold R."/>
            <person name="Robbe-Austerman S."/>
            <person name="Gordon S.V."/>
        </authorList>
    </citation>
    <scope>NUCLEOTIDE SEQUENCE [LARGE SCALE GENOMIC DNA]</scope>
    <scope>GENOME REANNOTATION</scope>
    <source>
        <strain>ATCC BAA-935 / AF2122/97</strain>
    </source>
</reference>